<evidence type="ECO:0000269" key="1">
    <source ref="1"/>
</evidence>
<evidence type="ECO:0000303" key="2">
    <source ref="1"/>
</evidence>
<evidence type="ECO:0000305" key="3"/>
<name>ITRY_CASLE</name>
<organism>
    <name type="scientific">Cassia leiandra</name>
    <name type="common">Marimari</name>
    <dbReference type="NCBI Taxonomy" id="1884235"/>
    <lineage>
        <taxon>Eukaryota</taxon>
        <taxon>Viridiplantae</taxon>
        <taxon>Streptophyta</taxon>
        <taxon>Embryophyta</taxon>
        <taxon>Tracheophyta</taxon>
        <taxon>Spermatophyta</taxon>
        <taxon>Magnoliopsida</taxon>
        <taxon>eudicotyledons</taxon>
        <taxon>Gunneridae</taxon>
        <taxon>Pentapetalae</taxon>
        <taxon>rosids</taxon>
        <taxon>fabids</taxon>
        <taxon>Fabales</taxon>
        <taxon>Fabaceae</taxon>
        <taxon>Caesalpinioideae</taxon>
        <taxon>Cassia clade</taxon>
        <taxon>Cassia</taxon>
    </lineage>
</organism>
<sequence>SVELDSDGEPIRNGGGLYYILPVVQGKGGGLEFAKTGSQS</sequence>
<comment type="function">
    <text evidence="1">Inhibits trypsin but not chymotrypsin, papain or porcine pancreatic alpha-amylase. Has insecticidal activity against A.aegypti. Functions by inhibiting the A.aegypti midgut proteases to reduce the survival of larva and adults.</text>
</comment>
<comment type="catalytic activity">
    <reaction evidence="1">
        <text>Preferential cleavage: Arg-|-Xaa, Lys-|-Xaa.</text>
        <dbReference type="EC" id="3.4.21.4"/>
    </reaction>
</comment>
<comment type="biophysicochemical properties">
    <phDependence>
        <text evidence="1">Stable in the pH range 2.2-10.0.</text>
    </phDependence>
    <temperatureDependence>
        <text evidence="1">Stable at temperatures up to 70 degrees Celsius. Incubation at temperatures above 70 degrees Celsius steadily decreases inhibitory activity.</text>
    </temperatureDependence>
</comment>
<comment type="subunit">
    <text evidence="1">Monomer.</text>
</comment>
<comment type="mass spectrometry"/>
<comment type="similarity">
    <text evidence="3">Belongs to the protease inhibitor I3 (leguminous Kunitz-type inhibitor) family.</text>
</comment>
<protein>
    <recommendedName>
        <fullName evidence="2">Trypsin inhibitor</fullName>
        <shortName evidence="2">ClTI</shortName>
        <ecNumber evidence="1">3.4.21.4</ecNumber>
    </recommendedName>
</protein>
<proteinExistence type="evidence at protein level"/>
<feature type="chain" id="PRO_0000437869" description="Trypsin inhibitor">
    <location>
        <begin position="1"/>
        <end position="40" status="greater than"/>
    </location>
</feature>
<feature type="non-terminal residue" evidence="2">
    <location>
        <position position="40"/>
    </location>
</feature>
<accession>C0HK48</accession>
<reference evidence="3" key="1">
    <citation type="journal article" date="2017" name="Process Biochem.">
        <title>A trypsin inhibitor purified from Cassia leiandra seeds has insecticidal activity against Aedes aegypti.</title>
        <authorList>
            <person name="Dias L.P."/>
            <person name="Oliveira J.T."/>
            <person name="Rocha-Bezerra L.C."/>
            <person name="Sousa D.O."/>
            <person name="Costa H.P."/>
            <person name="Araujo N.M."/>
            <person name="Carvalho A.F."/>
            <person name="Tabosa P.M."/>
            <person name="Monteiro-Moreira A.C."/>
            <person name="Lobo M.D."/>
            <person name="Moreno F.B."/>
            <person name="Rocha B.A."/>
            <person name="Lopes J.L."/>
            <person name="Beltramini L.M."/>
            <person name="Vasconcelos I.M."/>
        </authorList>
    </citation>
    <scope>PROTEIN SEQUENCE</scope>
    <scope>FUNCTION</scope>
    <scope>CATALYTIC ACTIVITY</scope>
    <scope>BIOPHYSICOCHEMICAL PROPERTIES</scope>
    <scope>SUBUNIT</scope>
    <scope>MASS SPECTROMETRY</scope>
    <source>
        <tissue evidence="2">Seed</tissue>
    </source>
</reference>
<keyword id="KW-0903">Direct protein sequencing</keyword>
<keyword id="KW-0378">Hydrolase</keyword>
<keyword id="KW-0646">Protease inhibitor</keyword>
<keyword id="KW-0722">Serine protease inhibitor</keyword>
<dbReference type="EC" id="3.4.21.4" evidence="1"/>
<dbReference type="SMR" id="C0HK48"/>
<dbReference type="GO" id="GO:0004252">
    <property type="term" value="F:serine-type endopeptidase activity"/>
    <property type="evidence" value="ECO:0007669"/>
    <property type="project" value="UniProtKB-EC"/>
</dbReference>
<dbReference type="GO" id="GO:0004867">
    <property type="term" value="F:serine-type endopeptidase inhibitor activity"/>
    <property type="evidence" value="ECO:0000314"/>
    <property type="project" value="UniProtKB"/>
</dbReference>
<dbReference type="Gene3D" id="2.80.10.50">
    <property type="match status" value="1"/>
</dbReference>
<dbReference type="InterPro" id="IPR011065">
    <property type="entry name" value="Kunitz_inhibitor_STI-like_sf"/>
</dbReference>
<dbReference type="SUPFAM" id="SSF50386">
    <property type="entry name" value="STI-like"/>
    <property type="match status" value="1"/>
</dbReference>